<gene>
    <name evidence="1" type="primary">nusB</name>
    <name type="ordered locus">Mmcs_2359</name>
</gene>
<accession>Q1B9G7</accession>
<sequence>MSDRRPDRGRHQARKRAVDLLFEAEARGLTAAEVATSRNKLAGTQPDVTALNPYTVTVARGVTDHRDHIDDLISAHLQGWTLDRLPAVDRAILRVAVWELLHAEDVPEPVAVDEAVELAKQLSTDDSPGFVNGVLGQVMLVTPQIRAASQAVRESAQGPSEG</sequence>
<organism>
    <name type="scientific">Mycobacterium sp. (strain MCS)</name>
    <dbReference type="NCBI Taxonomy" id="164756"/>
    <lineage>
        <taxon>Bacteria</taxon>
        <taxon>Bacillati</taxon>
        <taxon>Actinomycetota</taxon>
        <taxon>Actinomycetes</taxon>
        <taxon>Mycobacteriales</taxon>
        <taxon>Mycobacteriaceae</taxon>
        <taxon>Mycobacterium</taxon>
    </lineage>
</organism>
<name>NUSB_MYCSS</name>
<reference key="1">
    <citation type="submission" date="2006-06" db="EMBL/GenBank/DDBJ databases">
        <title>Complete sequence of chromosome of Mycobacterium sp. MCS.</title>
        <authorList>
            <consortium name="US DOE Joint Genome Institute"/>
            <person name="Copeland A."/>
            <person name="Lucas S."/>
            <person name="Lapidus A."/>
            <person name="Barry K."/>
            <person name="Detter J.C."/>
            <person name="Glavina del Rio T."/>
            <person name="Hammon N."/>
            <person name="Israni S."/>
            <person name="Dalin E."/>
            <person name="Tice H."/>
            <person name="Pitluck S."/>
            <person name="Martinez M."/>
            <person name="Schmutz J."/>
            <person name="Larimer F."/>
            <person name="Land M."/>
            <person name="Hauser L."/>
            <person name="Kyrpides N."/>
            <person name="Kim E."/>
            <person name="Miller C.D."/>
            <person name="Hughes J.E."/>
            <person name="Anderson A.J."/>
            <person name="Sims R.C."/>
            <person name="Richardson P."/>
        </authorList>
    </citation>
    <scope>NUCLEOTIDE SEQUENCE [LARGE SCALE GENOMIC DNA]</scope>
    <source>
        <strain>MCS</strain>
    </source>
</reference>
<dbReference type="EMBL" id="CP000384">
    <property type="protein sequence ID" value="ABG08467.1"/>
    <property type="molecule type" value="Genomic_DNA"/>
</dbReference>
<dbReference type="SMR" id="Q1B9G7"/>
<dbReference type="KEGG" id="mmc:Mmcs_2359"/>
<dbReference type="HOGENOM" id="CLU_087843_2_3_11"/>
<dbReference type="BioCyc" id="MSP164756:G1G6O-2411-MONOMER"/>
<dbReference type="GO" id="GO:0005829">
    <property type="term" value="C:cytosol"/>
    <property type="evidence" value="ECO:0007669"/>
    <property type="project" value="TreeGrafter"/>
</dbReference>
<dbReference type="GO" id="GO:0003723">
    <property type="term" value="F:RNA binding"/>
    <property type="evidence" value="ECO:0007669"/>
    <property type="project" value="UniProtKB-UniRule"/>
</dbReference>
<dbReference type="GO" id="GO:0006353">
    <property type="term" value="P:DNA-templated transcription termination"/>
    <property type="evidence" value="ECO:0007669"/>
    <property type="project" value="UniProtKB-UniRule"/>
</dbReference>
<dbReference type="GO" id="GO:0031564">
    <property type="term" value="P:transcription antitermination"/>
    <property type="evidence" value="ECO:0007669"/>
    <property type="project" value="UniProtKB-KW"/>
</dbReference>
<dbReference type="CDD" id="cd00619">
    <property type="entry name" value="Terminator_NusB"/>
    <property type="match status" value="1"/>
</dbReference>
<dbReference type="Gene3D" id="1.10.940.10">
    <property type="entry name" value="NusB-like"/>
    <property type="match status" value="1"/>
</dbReference>
<dbReference type="HAMAP" id="MF_00073">
    <property type="entry name" value="NusB"/>
    <property type="match status" value="1"/>
</dbReference>
<dbReference type="InterPro" id="IPR035926">
    <property type="entry name" value="NusB-like_sf"/>
</dbReference>
<dbReference type="InterPro" id="IPR011605">
    <property type="entry name" value="NusB_fam"/>
</dbReference>
<dbReference type="InterPro" id="IPR006027">
    <property type="entry name" value="NusB_RsmB_TIM44"/>
</dbReference>
<dbReference type="NCBIfam" id="TIGR01951">
    <property type="entry name" value="nusB"/>
    <property type="match status" value="1"/>
</dbReference>
<dbReference type="PANTHER" id="PTHR11078:SF3">
    <property type="entry name" value="ANTITERMINATION NUSB DOMAIN-CONTAINING PROTEIN"/>
    <property type="match status" value="1"/>
</dbReference>
<dbReference type="PANTHER" id="PTHR11078">
    <property type="entry name" value="N UTILIZATION SUBSTANCE PROTEIN B-RELATED"/>
    <property type="match status" value="1"/>
</dbReference>
<dbReference type="Pfam" id="PF01029">
    <property type="entry name" value="NusB"/>
    <property type="match status" value="1"/>
</dbReference>
<dbReference type="SUPFAM" id="SSF48013">
    <property type="entry name" value="NusB-like"/>
    <property type="match status" value="1"/>
</dbReference>
<proteinExistence type="inferred from homology"/>
<protein>
    <recommendedName>
        <fullName evidence="1">Transcription antitermination protein NusB</fullName>
    </recommendedName>
    <alternativeName>
        <fullName evidence="1">Antitermination factor NusB</fullName>
    </alternativeName>
</protein>
<comment type="function">
    <text evidence="1">Involved in transcription antitermination. Required for transcription of ribosomal RNA (rRNA) genes. Binds specifically to the boxA antiterminator sequence of the ribosomal RNA (rrn) operons.</text>
</comment>
<comment type="similarity">
    <text evidence="1">Belongs to the NusB family.</text>
</comment>
<feature type="chain" id="PRO_0000265547" description="Transcription antitermination protein NusB">
    <location>
        <begin position="1"/>
        <end position="162"/>
    </location>
</feature>
<keyword id="KW-0694">RNA-binding</keyword>
<keyword id="KW-0804">Transcription</keyword>
<keyword id="KW-0889">Transcription antitermination</keyword>
<keyword id="KW-0805">Transcription regulation</keyword>
<evidence type="ECO:0000255" key="1">
    <source>
        <dbReference type="HAMAP-Rule" id="MF_00073"/>
    </source>
</evidence>